<evidence type="ECO:0000255" key="1">
    <source>
        <dbReference type="HAMAP-Rule" id="MF_00150"/>
    </source>
</evidence>
<comment type="function">
    <text evidence="1">Catalyzes the NADPH-dependent reduction of N-acetyl-5-glutamyl phosphate to yield N-acetyl-L-glutamate 5-semialdehyde.</text>
</comment>
<comment type="catalytic activity">
    <reaction evidence="1">
        <text>N-acetyl-L-glutamate 5-semialdehyde + phosphate + NADP(+) = N-acetyl-L-glutamyl 5-phosphate + NADPH + H(+)</text>
        <dbReference type="Rhea" id="RHEA:21588"/>
        <dbReference type="ChEBI" id="CHEBI:15378"/>
        <dbReference type="ChEBI" id="CHEBI:29123"/>
        <dbReference type="ChEBI" id="CHEBI:43474"/>
        <dbReference type="ChEBI" id="CHEBI:57783"/>
        <dbReference type="ChEBI" id="CHEBI:57936"/>
        <dbReference type="ChEBI" id="CHEBI:58349"/>
        <dbReference type="EC" id="1.2.1.38"/>
    </reaction>
</comment>
<comment type="pathway">
    <text evidence="1">Amino-acid biosynthesis; L-arginine biosynthesis; N(2)-acetyl-L-ornithine from L-glutamate: step 3/4.</text>
</comment>
<comment type="subcellular location">
    <subcellularLocation>
        <location evidence="1">Cytoplasm</location>
    </subcellularLocation>
</comment>
<comment type="similarity">
    <text evidence="1">Belongs to the NAGSA dehydrogenase family. Type 1 subfamily.</text>
</comment>
<sequence>MKVSIVGITGYSGLELVKILNNHKKVELVSIHATKEVGRRLSDVYPYLAGVCDLKIEDFDAQEIIEKADLVFFATPSGVASSLAEEFVQADFPIIDLSGDHRLPADVYQEWYKKSPAKKMILNKFTYALSEYTDVKGKKFIANPGCYATATELALIPLVAAGLIETDSIIVDAKSGLTGAGKALSESSHFVNVHDNYMTYKLNHHQHIPEIVQTLQAFDADMPEIQFSTSLLPVNRGIMATVYCKLKKDVAVSDIASAFAKAYDDKPFVRVQENLPELHNVIGSNFTDIGFAYNEKTNVMTVISVIDNLLKGASGQAVQNLNLMQGWDETEGLHMTPSYL</sequence>
<organism>
    <name type="scientific">Streptococcus thermophilus (strain ATCC BAA-250 / LMG 18311)</name>
    <dbReference type="NCBI Taxonomy" id="264199"/>
    <lineage>
        <taxon>Bacteria</taxon>
        <taxon>Bacillati</taxon>
        <taxon>Bacillota</taxon>
        <taxon>Bacilli</taxon>
        <taxon>Lactobacillales</taxon>
        <taxon>Streptococcaceae</taxon>
        <taxon>Streptococcus</taxon>
    </lineage>
</organism>
<name>ARGC_STRT2</name>
<proteinExistence type="inferred from homology"/>
<dbReference type="EC" id="1.2.1.38" evidence="1"/>
<dbReference type="EMBL" id="CP000023">
    <property type="protein sequence ID" value="AAV60174.1"/>
    <property type="molecule type" value="Genomic_DNA"/>
</dbReference>
<dbReference type="RefSeq" id="WP_011225581.1">
    <property type="nucleotide sequence ID" value="NC_006448.1"/>
</dbReference>
<dbReference type="SMR" id="Q5M5L1"/>
<dbReference type="STRING" id="264199.stu0464"/>
<dbReference type="GeneID" id="66898375"/>
<dbReference type="KEGG" id="stl:stu0464"/>
<dbReference type="eggNOG" id="COG0002">
    <property type="taxonomic scope" value="Bacteria"/>
</dbReference>
<dbReference type="HOGENOM" id="CLU_006384_0_1_9"/>
<dbReference type="UniPathway" id="UPA00068">
    <property type="reaction ID" value="UER00108"/>
</dbReference>
<dbReference type="Proteomes" id="UP000001170">
    <property type="component" value="Chromosome"/>
</dbReference>
<dbReference type="GO" id="GO:0005737">
    <property type="term" value="C:cytoplasm"/>
    <property type="evidence" value="ECO:0007669"/>
    <property type="project" value="UniProtKB-SubCell"/>
</dbReference>
<dbReference type="GO" id="GO:0003942">
    <property type="term" value="F:N-acetyl-gamma-glutamyl-phosphate reductase activity"/>
    <property type="evidence" value="ECO:0007669"/>
    <property type="project" value="UniProtKB-UniRule"/>
</dbReference>
<dbReference type="GO" id="GO:0051287">
    <property type="term" value="F:NAD binding"/>
    <property type="evidence" value="ECO:0007669"/>
    <property type="project" value="InterPro"/>
</dbReference>
<dbReference type="GO" id="GO:0070401">
    <property type="term" value="F:NADP+ binding"/>
    <property type="evidence" value="ECO:0007669"/>
    <property type="project" value="InterPro"/>
</dbReference>
<dbReference type="GO" id="GO:0006526">
    <property type="term" value="P:L-arginine biosynthetic process"/>
    <property type="evidence" value="ECO:0007669"/>
    <property type="project" value="UniProtKB-UniRule"/>
</dbReference>
<dbReference type="CDD" id="cd23934">
    <property type="entry name" value="AGPR_1_C"/>
    <property type="match status" value="1"/>
</dbReference>
<dbReference type="CDD" id="cd17895">
    <property type="entry name" value="AGPR_1_N"/>
    <property type="match status" value="1"/>
</dbReference>
<dbReference type="FunFam" id="3.30.360.10:FF:000014">
    <property type="entry name" value="N-acetyl-gamma-glutamyl-phosphate reductase"/>
    <property type="match status" value="1"/>
</dbReference>
<dbReference type="Gene3D" id="3.30.360.10">
    <property type="entry name" value="Dihydrodipicolinate Reductase, domain 2"/>
    <property type="match status" value="1"/>
</dbReference>
<dbReference type="Gene3D" id="3.40.50.720">
    <property type="entry name" value="NAD(P)-binding Rossmann-like Domain"/>
    <property type="match status" value="1"/>
</dbReference>
<dbReference type="HAMAP" id="MF_00150">
    <property type="entry name" value="ArgC_type1"/>
    <property type="match status" value="1"/>
</dbReference>
<dbReference type="InterPro" id="IPR023013">
    <property type="entry name" value="AGPR_AS"/>
</dbReference>
<dbReference type="InterPro" id="IPR000706">
    <property type="entry name" value="AGPR_type-1"/>
</dbReference>
<dbReference type="InterPro" id="IPR036291">
    <property type="entry name" value="NAD(P)-bd_dom_sf"/>
</dbReference>
<dbReference type="InterPro" id="IPR050085">
    <property type="entry name" value="NAGSA_dehydrogenase"/>
</dbReference>
<dbReference type="InterPro" id="IPR000534">
    <property type="entry name" value="Semialdehyde_DH_NAD-bd"/>
</dbReference>
<dbReference type="NCBIfam" id="TIGR01850">
    <property type="entry name" value="argC"/>
    <property type="match status" value="1"/>
</dbReference>
<dbReference type="PANTHER" id="PTHR32338:SF10">
    <property type="entry name" value="N-ACETYL-GAMMA-GLUTAMYL-PHOSPHATE REDUCTASE, CHLOROPLASTIC-RELATED"/>
    <property type="match status" value="1"/>
</dbReference>
<dbReference type="PANTHER" id="PTHR32338">
    <property type="entry name" value="N-ACETYL-GAMMA-GLUTAMYL-PHOSPHATE REDUCTASE, CHLOROPLASTIC-RELATED-RELATED"/>
    <property type="match status" value="1"/>
</dbReference>
<dbReference type="Pfam" id="PF01118">
    <property type="entry name" value="Semialdhyde_dh"/>
    <property type="match status" value="1"/>
</dbReference>
<dbReference type="Pfam" id="PF22698">
    <property type="entry name" value="Semialdhyde_dhC_1"/>
    <property type="match status" value="1"/>
</dbReference>
<dbReference type="SMART" id="SM00859">
    <property type="entry name" value="Semialdhyde_dh"/>
    <property type="match status" value="1"/>
</dbReference>
<dbReference type="SUPFAM" id="SSF55347">
    <property type="entry name" value="Glyceraldehyde-3-phosphate dehydrogenase-like, C-terminal domain"/>
    <property type="match status" value="1"/>
</dbReference>
<dbReference type="SUPFAM" id="SSF51735">
    <property type="entry name" value="NAD(P)-binding Rossmann-fold domains"/>
    <property type="match status" value="1"/>
</dbReference>
<dbReference type="PROSITE" id="PS01224">
    <property type="entry name" value="ARGC"/>
    <property type="match status" value="1"/>
</dbReference>
<gene>
    <name evidence="1" type="primary">argC</name>
    <name type="ordered locus">stu0464</name>
</gene>
<accession>Q5M5L1</accession>
<protein>
    <recommendedName>
        <fullName evidence="1">N-acetyl-gamma-glutamyl-phosphate reductase</fullName>
        <shortName evidence="1">AGPR</shortName>
        <ecNumber evidence="1">1.2.1.38</ecNumber>
    </recommendedName>
    <alternativeName>
        <fullName evidence="1">N-acetyl-glutamate semialdehyde dehydrogenase</fullName>
        <shortName evidence="1">NAGSA dehydrogenase</shortName>
    </alternativeName>
</protein>
<keyword id="KW-0028">Amino-acid biosynthesis</keyword>
<keyword id="KW-0055">Arginine biosynthesis</keyword>
<keyword id="KW-0963">Cytoplasm</keyword>
<keyword id="KW-0521">NADP</keyword>
<keyword id="KW-0560">Oxidoreductase</keyword>
<keyword id="KW-1185">Reference proteome</keyword>
<feature type="chain" id="PRO_0000112461" description="N-acetyl-gamma-glutamyl-phosphate reductase">
    <location>
        <begin position="1"/>
        <end position="340"/>
    </location>
</feature>
<feature type="active site" evidence="1">
    <location>
        <position position="146"/>
    </location>
</feature>
<reference key="1">
    <citation type="journal article" date="2004" name="Nat. Biotechnol.">
        <title>Complete sequence and comparative genome analysis of the dairy bacterium Streptococcus thermophilus.</title>
        <authorList>
            <person name="Bolotin A."/>
            <person name="Quinquis B."/>
            <person name="Renault P."/>
            <person name="Sorokin A."/>
            <person name="Ehrlich S.D."/>
            <person name="Kulakauskas S."/>
            <person name="Lapidus A."/>
            <person name="Goltsman E."/>
            <person name="Mazur M."/>
            <person name="Pusch G.D."/>
            <person name="Fonstein M."/>
            <person name="Overbeek R."/>
            <person name="Kyprides N."/>
            <person name="Purnelle B."/>
            <person name="Prozzi D."/>
            <person name="Ngui K."/>
            <person name="Masuy D."/>
            <person name="Hancy F."/>
            <person name="Burteau S."/>
            <person name="Boutry M."/>
            <person name="Delcour J."/>
            <person name="Goffeau A."/>
            <person name="Hols P."/>
        </authorList>
    </citation>
    <scope>NUCLEOTIDE SEQUENCE [LARGE SCALE GENOMIC DNA]</scope>
    <source>
        <strain>ATCC BAA-250 / LMG 18311</strain>
    </source>
</reference>